<reference key="1">
    <citation type="journal article" date="2003" name="Nature">
        <title>Unique physiological and pathogenic features of Leptospira interrogans revealed by whole-genome sequencing.</title>
        <authorList>
            <person name="Ren S.-X."/>
            <person name="Fu G."/>
            <person name="Jiang X.-G."/>
            <person name="Zeng R."/>
            <person name="Miao Y.-G."/>
            <person name="Xu H."/>
            <person name="Zhang Y.-X."/>
            <person name="Xiong H."/>
            <person name="Lu G."/>
            <person name="Lu L.-F."/>
            <person name="Jiang H.-Q."/>
            <person name="Jia J."/>
            <person name="Tu Y.-F."/>
            <person name="Jiang J.-X."/>
            <person name="Gu W.-Y."/>
            <person name="Zhang Y.-Q."/>
            <person name="Cai Z."/>
            <person name="Sheng H.-H."/>
            <person name="Yin H.-F."/>
            <person name="Zhang Y."/>
            <person name="Zhu G.-F."/>
            <person name="Wan M."/>
            <person name="Huang H.-L."/>
            <person name="Qian Z."/>
            <person name="Wang S.-Y."/>
            <person name="Ma W."/>
            <person name="Yao Z.-J."/>
            <person name="Shen Y."/>
            <person name="Qiang B.-Q."/>
            <person name="Xia Q.-C."/>
            <person name="Guo X.-K."/>
            <person name="Danchin A."/>
            <person name="Saint Girons I."/>
            <person name="Somerville R.L."/>
            <person name="Wen Y.-M."/>
            <person name="Shi M.-H."/>
            <person name="Chen Z."/>
            <person name="Xu J.-G."/>
            <person name="Zhao G.-P."/>
        </authorList>
    </citation>
    <scope>NUCLEOTIDE SEQUENCE [LARGE SCALE GENOMIC DNA]</scope>
    <source>
        <strain>56601</strain>
    </source>
</reference>
<dbReference type="EC" id="2.1.1.199" evidence="1"/>
<dbReference type="EMBL" id="AE010300">
    <property type="protein sequence ID" value="AAN49244.1"/>
    <property type="molecule type" value="Genomic_DNA"/>
</dbReference>
<dbReference type="RefSeq" id="NP_712226.1">
    <property type="nucleotide sequence ID" value="NC_004342.2"/>
</dbReference>
<dbReference type="RefSeq" id="WP_000445614.1">
    <property type="nucleotide sequence ID" value="NC_004342.2"/>
</dbReference>
<dbReference type="SMR" id="Q8F4J6"/>
<dbReference type="FunCoup" id="Q8F4J6">
    <property type="interactions" value="508"/>
</dbReference>
<dbReference type="STRING" id="189518.LA_2045"/>
<dbReference type="PaxDb" id="189518-LA_2045"/>
<dbReference type="EnsemblBacteria" id="AAN49244">
    <property type="protein sequence ID" value="AAN49244"/>
    <property type="gene ID" value="LA_2045"/>
</dbReference>
<dbReference type="KEGG" id="lil:LA_2045"/>
<dbReference type="PATRIC" id="fig|189518.3.peg.2041"/>
<dbReference type="HOGENOM" id="CLU_038422_3_0_12"/>
<dbReference type="InParanoid" id="Q8F4J6"/>
<dbReference type="OrthoDB" id="9806637at2"/>
<dbReference type="Proteomes" id="UP000001408">
    <property type="component" value="Chromosome I"/>
</dbReference>
<dbReference type="GO" id="GO:0005737">
    <property type="term" value="C:cytoplasm"/>
    <property type="evidence" value="ECO:0000318"/>
    <property type="project" value="GO_Central"/>
</dbReference>
<dbReference type="GO" id="GO:0071424">
    <property type="term" value="F:rRNA (cytosine-N4-)-methyltransferase activity"/>
    <property type="evidence" value="ECO:0000318"/>
    <property type="project" value="GO_Central"/>
</dbReference>
<dbReference type="GO" id="GO:0070475">
    <property type="term" value="P:rRNA base methylation"/>
    <property type="evidence" value="ECO:0000318"/>
    <property type="project" value="GO_Central"/>
</dbReference>
<dbReference type="FunFam" id="1.10.150.170:FF:000006">
    <property type="entry name" value="Ribosomal RNA small subunit methyltransferase H"/>
    <property type="match status" value="1"/>
</dbReference>
<dbReference type="Gene3D" id="1.10.150.170">
    <property type="entry name" value="Putative methyltransferase TM0872, insert domain"/>
    <property type="match status" value="1"/>
</dbReference>
<dbReference type="Gene3D" id="3.40.50.150">
    <property type="entry name" value="Vaccinia Virus protein VP39"/>
    <property type="match status" value="1"/>
</dbReference>
<dbReference type="HAMAP" id="MF_01007">
    <property type="entry name" value="16SrRNA_methyltr_H"/>
    <property type="match status" value="1"/>
</dbReference>
<dbReference type="InterPro" id="IPR002903">
    <property type="entry name" value="RsmH"/>
</dbReference>
<dbReference type="InterPro" id="IPR023397">
    <property type="entry name" value="SAM-dep_MeTrfase_MraW_recog"/>
</dbReference>
<dbReference type="InterPro" id="IPR029063">
    <property type="entry name" value="SAM-dependent_MTases_sf"/>
</dbReference>
<dbReference type="NCBIfam" id="TIGR00006">
    <property type="entry name" value="16S rRNA (cytosine(1402)-N(4))-methyltransferase RsmH"/>
    <property type="match status" value="1"/>
</dbReference>
<dbReference type="PANTHER" id="PTHR11265:SF0">
    <property type="entry name" value="12S RRNA N4-METHYLCYTIDINE METHYLTRANSFERASE"/>
    <property type="match status" value="1"/>
</dbReference>
<dbReference type="PANTHER" id="PTHR11265">
    <property type="entry name" value="S-ADENOSYL-METHYLTRANSFERASE MRAW"/>
    <property type="match status" value="1"/>
</dbReference>
<dbReference type="Pfam" id="PF01795">
    <property type="entry name" value="Methyltransf_5"/>
    <property type="match status" value="1"/>
</dbReference>
<dbReference type="PIRSF" id="PIRSF004486">
    <property type="entry name" value="MraW"/>
    <property type="match status" value="1"/>
</dbReference>
<dbReference type="SUPFAM" id="SSF81799">
    <property type="entry name" value="Putative methyltransferase TM0872, insert domain"/>
    <property type="match status" value="1"/>
</dbReference>
<dbReference type="SUPFAM" id="SSF53335">
    <property type="entry name" value="S-adenosyl-L-methionine-dependent methyltransferases"/>
    <property type="match status" value="1"/>
</dbReference>
<evidence type="ECO:0000255" key="1">
    <source>
        <dbReference type="HAMAP-Rule" id="MF_01007"/>
    </source>
</evidence>
<comment type="function">
    <text evidence="1">Specifically methylates the N4 position of cytidine in position 1402 (C1402) of 16S rRNA.</text>
</comment>
<comment type="catalytic activity">
    <reaction evidence="1">
        <text>cytidine(1402) in 16S rRNA + S-adenosyl-L-methionine = N(4)-methylcytidine(1402) in 16S rRNA + S-adenosyl-L-homocysteine + H(+)</text>
        <dbReference type="Rhea" id="RHEA:42928"/>
        <dbReference type="Rhea" id="RHEA-COMP:10286"/>
        <dbReference type="Rhea" id="RHEA-COMP:10287"/>
        <dbReference type="ChEBI" id="CHEBI:15378"/>
        <dbReference type="ChEBI" id="CHEBI:57856"/>
        <dbReference type="ChEBI" id="CHEBI:59789"/>
        <dbReference type="ChEBI" id="CHEBI:74506"/>
        <dbReference type="ChEBI" id="CHEBI:82748"/>
        <dbReference type="EC" id="2.1.1.199"/>
    </reaction>
</comment>
<comment type="subcellular location">
    <subcellularLocation>
        <location evidence="1">Cytoplasm</location>
    </subcellularLocation>
</comment>
<comment type="similarity">
    <text evidence="1">Belongs to the methyltransferase superfamily. RsmH family.</text>
</comment>
<proteinExistence type="inferred from homology"/>
<accession>Q8F4J6</accession>
<sequence length="334" mass="38508">MESPCRTITLEKNGTSLEPVHYSVQGKEILQIFKENFQKEDPVLFLDGTAGEGGHSFLFLKEFPNSRIILCDRDPIMLSRALTRLSDFSERVVSIQTNFSEINQKLLTSYGIDQTPQGILLDLGISTFHLFHSGRGFSFRESEPLDMRLNPNSGQSAEEILNIYPKDRLMNIFYTYGEERWSKKIAEVIVETRKQNSISTTFELANLVSKIIPRKFWPPGRHPATRIFQALRIEVNQELAHIENGLKLLLDLLRLGGVIQVISFHSLEDRIVKNSFRDYAKQNGFELLTKKPIFPSQEEIDENPASRSAKLRILRKTKSVDKKYRNKNFEEEEE</sequence>
<feature type="chain" id="PRO_0000108650" description="Ribosomal RNA small subunit methyltransferase H">
    <location>
        <begin position="1"/>
        <end position="334"/>
    </location>
</feature>
<feature type="binding site" evidence="1">
    <location>
        <begin position="53"/>
        <end position="55"/>
    </location>
    <ligand>
        <name>S-adenosyl-L-methionine</name>
        <dbReference type="ChEBI" id="CHEBI:59789"/>
    </ligand>
</feature>
<feature type="binding site" evidence="1">
    <location>
        <position position="72"/>
    </location>
    <ligand>
        <name>S-adenosyl-L-methionine</name>
        <dbReference type="ChEBI" id="CHEBI:59789"/>
    </ligand>
</feature>
<feature type="binding site" evidence="1">
    <location>
        <position position="99"/>
    </location>
    <ligand>
        <name>S-adenosyl-L-methionine</name>
        <dbReference type="ChEBI" id="CHEBI:59789"/>
    </ligand>
</feature>
<feature type="binding site" evidence="1">
    <location>
        <position position="122"/>
    </location>
    <ligand>
        <name>S-adenosyl-L-methionine</name>
        <dbReference type="ChEBI" id="CHEBI:59789"/>
    </ligand>
</feature>
<feature type="binding site" evidence="1">
    <location>
        <position position="129"/>
    </location>
    <ligand>
        <name>S-adenosyl-L-methionine</name>
        <dbReference type="ChEBI" id="CHEBI:59789"/>
    </ligand>
</feature>
<name>RSMH_LEPIN</name>
<keyword id="KW-0963">Cytoplasm</keyword>
<keyword id="KW-0489">Methyltransferase</keyword>
<keyword id="KW-1185">Reference proteome</keyword>
<keyword id="KW-0698">rRNA processing</keyword>
<keyword id="KW-0949">S-adenosyl-L-methionine</keyword>
<keyword id="KW-0808">Transferase</keyword>
<organism>
    <name type="scientific">Leptospira interrogans serogroup Icterohaemorrhagiae serovar Lai (strain 56601)</name>
    <dbReference type="NCBI Taxonomy" id="189518"/>
    <lineage>
        <taxon>Bacteria</taxon>
        <taxon>Pseudomonadati</taxon>
        <taxon>Spirochaetota</taxon>
        <taxon>Spirochaetia</taxon>
        <taxon>Leptospirales</taxon>
        <taxon>Leptospiraceae</taxon>
        <taxon>Leptospira</taxon>
    </lineage>
</organism>
<gene>
    <name evidence="1" type="primary">rsmH</name>
    <name type="synonym">mraW</name>
    <name type="ordered locus">LA_2045</name>
</gene>
<protein>
    <recommendedName>
        <fullName evidence="1">Ribosomal RNA small subunit methyltransferase H</fullName>
        <ecNumber evidence="1">2.1.1.199</ecNumber>
    </recommendedName>
    <alternativeName>
        <fullName evidence="1">16S rRNA m(4)C1402 methyltransferase</fullName>
    </alternativeName>
    <alternativeName>
        <fullName evidence="1">rRNA (cytosine-N(4)-)-methyltransferase RsmH</fullName>
    </alternativeName>
</protein>